<reference key="1">
    <citation type="journal article" date="2005" name="Nature">
        <title>The genome of the social amoeba Dictyostelium discoideum.</title>
        <authorList>
            <person name="Eichinger L."/>
            <person name="Pachebat J.A."/>
            <person name="Gloeckner G."/>
            <person name="Rajandream M.A."/>
            <person name="Sucgang R."/>
            <person name="Berriman M."/>
            <person name="Song J."/>
            <person name="Olsen R."/>
            <person name="Szafranski K."/>
            <person name="Xu Q."/>
            <person name="Tunggal B."/>
            <person name="Kummerfeld S."/>
            <person name="Madera M."/>
            <person name="Konfortov B.A."/>
            <person name="Rivero F."/>
            <person name="Bankier A.T."/>
            <person name="Lehmann R."/>
            <person name="Hamlin N."/>
            <person name="Davies R."/>
            <person name="Gaudet P."/>
            <person name="Fey P."/>
            <person name="Pilcher K."/>
            <person name="Chen G."/>
            <person name="Saunders D."/>
            <person name="Sodergren E.J."/>
            <person name="Davis P."/>
            <person name="Kerhornou A."/>
            <person name="Nie X."/>
            <person name="Hall N."/>
            <person name="Anjard C."/>
            <person name="Hemphill L."/>
            <person name="Bason N."/>
            <person name="Farbrother P."/>
            <person name="Desany B."/>
            <person name="Just E."/>
            <person name="Morio T."/>
            <person name="Rost R."/>
            <person name="Churcher C.M."/>
            <person name="Cooper J."/>
            <person name="Haydock S."/>
            <person name="van Driessche N."/>
            <person name="Cronin A."/>
            <person name="Goodhead I."/>
            <person name="Muzny D.M."/>
            <person name="Mourier T."/>
            <person name="Pain A."/>
            <person name="Lu M."/>
            <person name="Harper D."/>
            <person name="Lindsay R."/>
            <person name="Hauser H."/>
            <person name="James K.D."/>
            <person name="Quiles M."/>
            <person name="Madan Babu M."/>
            <person name="Saito T."/>
            <person name="Buchrieser C."/>
            <person name="Wardroper A."/>
            <person name="Felder M."/>
            <person name="Thangavelu M."/>
            <person name="Johnson D."/>
            <person name="Knights A."/>
            <person name="Loulseged H."/>
            <person name="Mungall K.L."/>
            <person name="Oliver K."/>
            <person name="Price C."/>
            <person name="Quail M.A."/>
            <person name="Urushihara H."/>
            <person name="Hernandez J."/>
            <person name="Rabbinowitsch E."/>
            <person name="Steffen D."/>
            <person name="Sanders M."/>
            <person name="Ma J."/>
            <person name="Kohara Y."/>
            <person name="Sharp S."/>
            <person name="Simmonds M.N."/>
            <person name="Spiegler S."/>
            <person name="Tivey A."/>
            <person name="Sugano S."/>
            <person name="White B."/>
            <person name="Walker D."/>
            <person name="Woodward J.R."/>
            <person name="Winckler T."/>
            <person name="Tanaka Y."/>
            <person name="Shaulsky G."/>
            <person name="Schleicher M."/>
            <person name="Weinstock G.M."/>
            <person name="Rosenthal A."/>
            <person name="Cox E.C."/>
            <person name="Chisholm R.L."/>
            <person name="Gibbs R.A."/>
            <person name="Loomis W.F."/>
            <person name="Platzer M."/>
            <person name="Kay R.R."/>
            <person name="Williams J.G."/>
            <person name="Dear P.H."/>
            <person name="Noegel A.A."/>
            <person name="Barrell B.G."/>
            <person name="Kuspa A."/>
        </authorList>
    </citation>
    <scope>NUCLEOTIDE SEQUENCE [LARGE SCALE GENOMIC DNA]</scope>
    <source>
        <strain>AX4</strain>
    </source>
</reference>
<dbReference type="EMBL" id="AAFI02000218">
    <property type="protein sequence ID" value="EAL60636.1"/>
    <property type="molecule type" value="Genomic_DNA"/>
</dbReference>
<dbReference type="RefSeq" id="XP_629075.1">
    <property type="nucleotide sequence ID" value="XM_629073.1"/>
</dbReference>
<dbReference type="PaxDb" id="44689-DDB0192071"/>
<dbReference type="EnsemblProtists" id="EAL60636">
    <property type="protein sequence ID" value="EAL60636"/>
    <property type="gene ID" value="DDB_G0293648"/>
</dbReference>
<dbReference type="GeneID" id="8629367"/>
<dbReference type="KEGG" id="ddi:DDB_G0293648"/>
<dbReference type="dictyBase" id="DDB_G0293648"/>
<dbReference type="VEuPathDB" id="AmoebaDB:DDB_G0293648"/>
<dbReference type="HOGENOM" id="CLU_2547335_0_0_1"/>
<dbReference type="InParanoid" id="Q54BF4"/>
<dbReference type="PRO" id="PR:Q54BF4"/>
<dbReference type="Proteomes" id="UP000002195">
    <property type="component" value="Chromosome 6"/>
</dbReference>
<sequence length="83" mass="9912">MTEVRKYLVRKVPTNKSIQTRQMPDSDYSSPAFYLSEGYPCKEWLRDRFYTVLVIELRGLNYQRTHLSKFAKECLLTSNQRCI</sequence>
<keyword id="KW-1185">Reference proteome</keyword>
<name>Y2071_DICDI</name>
<protein>
    <recommendedName>
        <fullName>Putative uncharacterized protein DDB_G0293648</fullName>
    </recommendedName>
</protein>
<gene>
    <name type="ORF">DDB_G0293648</name>
</gene>
<proteinExistence type="predicted"/>
<organism>
    <name type="scientific">Dictyostelium discoideum</name>
    <name type="common">Social amoeba</name>
    <dbReference type="NCBI Taxonomy" id="44689"/>
    <lineage>
        <taxon>Eukaryota</taxon>
        <taxon>Amoebozoa</taxon>
        <taxon>Evosea</taxon>
        <taxon>Eumycetozoa</taxon>
        <taxon>Dictyostelia</taxon>
        <taxon>Dictyosteliales</taxon>
        <taxon>Dictyosteliaceae</taxon>
        <taxon>Dictyostelium</taxon>
    </lineage>
</organism>
<accession>Q54BF4</accession>
<feature type="chain" id="PRO_0000343939" description="Putative uncharacterized protein DDB_G0293648">
    <location>
        <begin position="1"/>
        <end position="83"/>
    </location>
</feature>